<name>SAS1_BACCR</name>
<comment type="function">
    <text evidence="1">SASP are bound to spore DNA. They are double-stranded DNA-binding proteins that cause DNA to change to an a-like conformation. They protect the DNA backbone from chemical and enzymatic cleavage and are thus involved in dormant spore's high resistance to UV light (By similarity).</text>
</comment>
<comment type="similarity">
    <text evidence="2">Belongs to the alpha/beta-type SASP family.</text>
</comment>
<accession>P0A4F2</accession>
<accession>P06551</accession>
<proteinExistence type="inferred from homology"/>
<feature type="chain" id="PRO_0000196289" description="Small, acid-soluble spore protein 1">
    <location>
        <begin position="1"/>
        <end position="70"/>
    </location>
</feature>
<feature type="site" description="Cleavage; by spore protease" evidence="1">
    <location>
        <begin position="27"/>
        <end position="28"/>
    </location>
</feature>
<reference key="1">
    <citation type="journal article" date="2003" name="Nature">
        <title>Genome sequence of Bacillus cereus and comparative analysis with Bacillus anthracis.</title>
        <authorList>
            <person name="Ivanova N."/>
            <person name="Sorokin A."/>
            <person name="Anderson I."/>
            <person name="Galleron N."/>
            <person name="Candelon B."/>
            <person name="Kapatral V."/>
            <person name="Bhattacharyya A."/>
            <person name="Reznik G."/>
            <person name="Mikhailova N."/>
            <person name="Lapidus A."/>
            <person name="Chu L."/>
            <person name="Mazur M."/>
            <person name="Goltsman E."/>
            <person name="Larsen N."/>
            <person name="D'Souza M."/>
            <person name="Walunas T."/>
            <person name="Grechkin Y."/>
            <person name="Pusch G."/>
            <person name="Haselkorn R."/>
            <person name="Fonstein M."/>
            <person name="Ehrlich S.D."/>
            <person name="Overbeek R."/>
            <person name="Kyrpides N.C."/>
        </authorList>
    </citation>
    <scope>NUCLEOTIDE SEQUENCE [LARGE SCALE GENOMIC DNA]</scope>
    <source>
        <strain>ATCC 14579 / DSM 31 / CCUG 7414 / JCM 2152 / NBRC 15305 / NCIMB 9373 / NCTC 2599 / NRRL B-3711</strain>
    </source>
</reference>
<protein>
    <recommendedName>
        <fullName>Small, acid-soluble spore protein 1</fullName>
        <shortName>SASP</shortName>
    </recommendedName>
</protein>
<organism>
    <name type="scientific">Bacillus cereus (strain ATCC 14579 / DSM 31 / CCUG 7414 / JCM 2152 / NBRC 15305 / NCIMB 9373 / NCTC 2599 / NRRL B-3711)</name>
    <dbReference type="NCBI Taxonomy" id="226900"/>
    <lineage>
        <taxon>Bacteria</taxon>
        <taxon>Bacillati</taxon>
        <taxon>Bacillota</taxon>
        <taxon>Bacilli</taxon>
        <taxon>Bacillales</taxon>
        <taxon>Bacillaceae</taxon>
        <taxon>Bacillus</taxon>
        <taxon>Bacillus cereus group</taxon>
    </lineage>
</organism>
<keyword id="KW-0238">DNA-binding</keyword>
<keyword id="KW-1185">Reference proteome</keyword>
<keyword id="KW-0749">Sporulation</keyword>
<gene>
    <name type="primary">sasP-1</name>
    <name type="ordered locus">BC_3091</name>
</gene>
<dbReference type="EMBL" id="AE016877">
    <property type="protein sequence ID" value="AAP10035.1"/>
    <property type="molecule type" value="Genomic_DNA"/>
</dbReference>
<dbReference type="RefSeq" id="NP_832834.1">
    <property type="nucleotide sequence ID" value="NC_004722.1"/>
</dbReference>
<dbReference type="SMR" id="P0A4F2"/>
<dbReference type="STRING" id="226900.BC_3091"/>
<dbReference type="KEGG" id="bce:BC3091"/>
<dbReference type="PATRIC" id="fig|226900.8.peg.3168"/>
<dbReference type="HOGENOM" id="CLU_169738_2_0_9"/>
<dbReference type="OrthoDB" id="2627848at2"/>
<dbReference type="Proteomes" id="UP000001417">
    <property type="component" value="Chromosome"/>
</dbReference>
<dbReference type="GO" id="GO:0003690">
    <property type="term" value="F:double-stranded DNA binding"/>
    <property type="evidence" value="ECO:0007669"/>
    <property type="project" value="InterPro"/>
</dbReference>
<dbReference type="GO" id="GO:0006265">
    <property type="term" value="P:DNA topological change"/>
    <property type="evidence" value="ECO:0007669"/>
    <property type="project" value="InterPro"/>
</dbReference>
<dbReference type="GO" id="GO:0030435">
    <property type="term" value="P:sporulation resulting in formation of a cellular spore"/>
    <property type="evidence" value="ECO:0007669"/>
    <property type="project" value="UniProtKB-KW"/>
</dbReference>
<dbReference type="Gene3D" id="6.10.10.80">
    <property type="entry name" value="Small, acid-soluble spore protein, alpha/beta type-like"/>
    <property type="match status" value="1"/>
</dbReference>
<dbReference type="InterPro" id="IPR001448">
    <property type="entry name" value="SASP_alpha/beta-type"/>
</dbReference>
<dbReference type="InterPro" id="IPR018126">
    <property type="entry name" value="SASP_alpha/beta-type_CS"/>
</dbReference>
<dbReference type="InterPro" id="IPR050847">
    <property type="entry name" value="SASP_DNA-binding"/>
</dbReference>
<dbReference type="InterPro" id="IPR038300">
    <property type="entry name" value="SASP_sf_alpha/beta"/>
</dbReference>
<dbReference type="PANTHER" id="PTHR36107">
    <property type="entry name" value="SMALL, ACID-SOLUBLE SPORE PROTEIN A"/>
    <property type="match status" value="1"/>
</dbReference>
<dbReference type="PANTHER" id="PTHR36107:SF1">
    <property type="entry name" value="SMALL, ACID-SOLUBLE SPORE PROTEIN A"/>
    <property type="match status" value="1"/>
</dbReference>
<dbReference type="Pfam" id="PF00269">
    <property type="entry name" value="SASP"/>
    <property type="match status" value="1"/>
</dbReference>
<dbReference type="PROSITE" id="PS00304">
    <property type="entry name" value="SASP_1"/>
    <property type="match status" value="1"/>
</dbReference>
<dbReference type="PROSITE" id="PS00684">
    <property type="entry name" value="SASP_2"/>
    <property type="match status" value="1"/>
</dbReference>
<evidence type="ECO:0000250" key="1"/>
<evidence type="ECO:0000305" key="2"/>
<sequence length="70" mass="7466">MGKNNSGSRNEVLVRGAEQALDQMKYEIAQEFGVQLGADTTARSNGSVGGEITKRLVAMAEQQLGGRANR</sequence>